<organism>
    <name type="scientific">Pseudomonas savastanoi pv. phaseolicola (strain 1448A / Race 6)</name>
    <name type="common">Pseudomonas syringae pv. phaseolicola (strain 1448A / Race 6)</name>
    <dbReference type="NCBI Taxonomy" id="264730"/>
    <lineage>
        <taxon>Bacteria</taxon>
        <taxon>Pseudomonadati</taxon>
        <taxon>Pseudomonadota</taxon>
        <taxon>Gammaproteobacteria</taxon>
        <taxon>Pseudomonadales</taxon>
        <taxon>Pseudomonadaceae</taxon>
        <taxon>Pseudomonas</taxon>
    </lineage>
</organism>
<name>SSUD_PSE14</name>
<dbReference type="EC" id="1.14.14.5" evidence="1"/>
<dbReference type="EMBL" id="CP000058">
    <property type="protein sequence ID" value="AAZ34006.1"/>
    <property type="molecule type" value="Genomic_DNA"/>
</dbReference>
<dbReference type="RefSeq" id="WP_004656807.1">
    <property type="nucleotide sequence ID" value="NC_005773.3"/>
</dbReference>
<dbReference type="SMR" id="Q48H03"/>
<dbReference type="KEGG" id="psp:PSPPH_3167"/>
<dbReference type="eggNOG" id="COG2141">
    <property type="taxonomic scope" value="Bacteria"/>
</dbReference>
<dbReference type="HOGENOM" id="CLU_027853_1_0_6"/>
<dbReference type="Proteomes" id="UP000000551">
    <property type="component" value="Chromosome"/>
</dbReference>
<dbReference type="GO" id="GO:0008726">
    <property type="term" value="F:alkanesulfonate monooxygenase activity"/>
    <property type="evidence" value="ECO:0007669"/>
    <property type="project" value="UniProtKB-UniRule"/>
</dbReference>
<dbReference type="GO" id="GO:0046306">
    <property type="term" value="P:alkanesulfonate catabolic process"/>
    <property type="evidence" value="ECO:0007669"/>
    <property type="project" value="TreeGrafter"/>
</dbReference>
<dbReference type="CDD" id="cd01094">
    <property type="entry name" value="Alkanesulfonate_monoxygenase"/>
    <property type="match status" value="1"/>
</dbReference>
<dbReference type="FunFam" id="3.20.20.30:FF:000001">
    <property type="entry name" value="Alkanesulfonate monooxygenase"/>
    <property type="match status" value="1"/>
</dbReference>
<dbReference type="Gene3D" id="3.20.20.30">
    <property type="entry name" value="Luciferase-like domain"/>
    <property type="match status" value="1"/>
</dbReference>
<dbReference type="HAMAP" id="MF_01229">
    <property type="entry name" value="Alkanesulf_monooxygen"/>
    <property type="match status" value="1"/>
</dbReference>
<dbReference type="InterPro" id="IPR019911">
    <property type="entry name" value="Alkanesulphonate_mOase_FMN-dep"/>
</dbReference>
<dbReference type="InterPro" id="IPR011251">
    <property type="entry name" value="Luciferase-like_dom"/>
</dbReference>
<dbReference type="InterPro" id="IPR036661">
    <property type="entry name" value="Luciferase-like_sf"/>
</dbReference>
<dbReference type="InterPro" id="IPR050172">
    <property type="entry name" value="SsuD_RutA_monooxygenase"/>
</dbReference>
<dbReference type="NCBIfam" id="TIGR03565">
    <property type="entry name" value="alk_sulf_monoox"/>
    <property type="match status" value="1"/>
</dbReference>
<dbReference type="NCBIfam" id="NF001939">
    <property type="entry name" value="PRK00719.1"/>
    <property type="match status" value="1"/>
</dbReference>
<dbReference type="PANTHER" id="PTHR42847">
    <property type="entry name" value="ALKANESULFONATE MONOOXYGENASE"/>
    <property type="match status" value="1"/>
</dbReference>
<dbReference type="PANTHER" id="PTHR42847:SF4">
    <property type="entry name" value="ALKANESULFONATE MONOOXYGENASE-RELATED"/>
    <property type="match status" value="1"/>
</dbReference>
<dbReference type="Pfam" id="PF00296">
    <property type="entry name" value="Bac_luciferase"/>
    <property type="match status" value="1"/>
</dbReference>
<dbReference type="SUPFAM" id="SSF51679">
    <property type="entry name" value="Bacterial luciferase-like"/>
    <property type="match status" value="1"/>
</dbReference>
<sequence length="379" mass="41510">MNVFWFLPTHGDGHYLGTTKGARPVTLNYLKQVAQAADDLGYYGVLIPTGRSCEDSWVIASALVPLTERLKYLVAIRPGIISPTVSARMAATLDRLSGGRLLINVVTGGDPDENRGDGSFLDHSERYEVTDEFLKIWRRVLQGEAVDFEGKHLRVQNAKALYPPIQKPYPPLYFGGSSDAAHDLAADQVDVYLTWGEPPAAVAQKLADVRERAARKGRTVKFGIRLHVIVRETSEEAWKAASTLIEHISDETIAAAQKSFSRFDSEGQRRMAALHDGRRDNLEIAPNLWAGVGLVRGGAGTALVGNPQEVAARIKEYADLGIDSFIFSGYPHLEEAYRFAELVFPLLPEPYASLAGRGITNLTGPFGEMIANDLPPQAK</sequence>
<proteinExistence type="inferred from homology"/>
<comment type="function">
    <text evidence="1">Catalyzes the desulfonation of aliphatic sulfonates.</text>
</comment>
<comment type="catalytic activity">
    <reaction evidence="1">
        <text>an alkanesulfonate + FMNH2 + O2 = an aldehyde + FMN + sulfite + H2O + 2 H(+)</text>
        <dbReference type="Rhea" id="RHEA:23064"/>
        <dbReference type="ChEBI" id="CHEBI:15377"/>
        <dbReference type="ChEBI" id="CHEBI:15378"/>
        <dbReference type="ChEBI" id="CHEBI:15379"/>
        <dbReference type="ChEBI" id="CHEBI:17359"/>
        <dbReference type="ChEBI" id="CHEBI:17478"/>
        <dbReference type="ChEBI" id="CHEBI:57618"/>
        <dbReference type="ChEBI" id="CHEBI:58210"/>
        <dbReference type="ChEBI" id="CHEBI:134249"/>
        <dbReference type="EC" id="1.14.14.5"/>
    </reaction>
</comment>
<comment type="similarity">
    <text evidence="1">Belongs to the SsuD family.</text>
</comment>
<feature type="chain" id="PRO_1000066827" description="Alkanesulfonate monooxygenase">
    <location>
        <begin position="1"/>
        <end position="379"/>
    </location>
</feature>
<accession>Q48H03</accession>
<protein>
    <recommendedName>
        <fullName evidence="1">Alkanesulfonate monooxygenase</fullName>
        <ecNumber evidence="1">1.14.14.5</ecNumber>
    </recommendedName>
    <alternativeName>
        <fullName evidence="1">FMNH2-dependent aliphatic sulfonate monooxygenase</fullName>
    </alternativeName>
</protein>
<gene>
    <name evidence="1" type="primary">ssuD</name>
    <name type="ordered locus">PSPPH_3167</name>
</gene>
<evidence type="ECO:0000255" key="1">
    <source>
        <dbReference type="HAMAP-Rule" id="MF_01229"/>
    </source>
</evidence>
<keyword id="KW-0285">Flavoprotein</keyword>
<keyword id="KW-0288">FMN</keyword>
<keyword id="KW-0503">Monooxygenase</keyword>
<keyword id="KW-0560">Oxidoreductase</keyword>
<reference key="1">
    <citation type="journal article" date="2005" name="J. Bacteriol.">
        <title>Whole-genome sequence analysis of Pseudomonas syringae pv. phaseolicola 1448A reveals divergence among pathovars in genes involved in virulence and transposition.</title>
        <authorList>
            <person name="Joardar V."/>
            <person name="Lindeberg M."/>
            <person name="Jackson R.W."/>
            <person name="Selengut J."/>
            <person name="Dodson R."/>
            <person name="Brinkac L.M."/>
            <person name="Daugherty S.C."/>
            <person name="DeBoy R.T."/>
            <person name="Durkin A.S."/>
            <person name="Gwinn Giglio M."/>
            <person name="Madupu R."/>
            <person name="Nelson W.C."/>
            <person name="Rosovitz M.J."/>
            <person name="Sullivan S.A."/>
            <person name="Crabtree J."/>
            <person name="Creasy T."/>
            <person name="Davidsen T.M."/>
            <person name="Haft D.H."/>
            <person name="Zafar N."/>
            <person name="Zhou L."/>
            <person name="Halpin R."/>
            <person name="Holley T."/>
            <person name="Khouri H.M."/>
            <person name="Feldblyum T.V."/>
            <person name="White O."/>
            <person name="Fraser C.M."/>
            <person name="Chatterjee A.K."/>
            <person name="Cartinhour S."/>
            <person name="Schneider D."/>
            <person name="Mansfield J.W."/>
            <person name="Collmer A."/>
            <person name="Buell R."/>
        </authorList>
    </citation>
    <scope>NUCLEOTIDE SEQUENCE [LARGE SCALE GENOMIC DNA]</scope>
    <source>
        <strain>1448A / Race 6</strain>
    </source>
</reference>